<name>RS16_PSEFS</name>
<organism>
    <name type="scientific">Pseudomonas fluorescens (strain SBW25)</name>
    <dbReference type="NCBI Taxonomy" id="216595"/>
    <lineage>
        <taxon>Bacteria</taxon>
        <taxon>Pseudomonadati</taxon>
        <taxon>Pseudomonadota</taxon>
        <taxon>Gammaproteobacteria</taxon>
        <taxon>Pseudomonadales</taxon>
        <taxon>Pseudomonadaceae</taxon>
        <taxon>Pseudomonas</taxon>
    </lineage>
</organism>
<keyword id="KW-0687">Ribonucleoprotein</keyword>
<keyword id="KW-0689">Ribosomal protein</keyword>
<proteinExistence type="inferred from homology"/>
<protein>
    <recommendedName>
        <fullName evidence="1">Small ribosomal subunit protein bS16</fullName>
    </recommendedName>
    <alternativeName>
        <fullName evidence="2">30S ribosomal protein S16</fullName>
    </alternativeName>
</protein>
<reference key="1">
    <citation type="journal article" date="2009" name="Genome Biol.">
        <title>Genomic and genetic analyses of diversity and plant interactions of Pseudomonas fluorescens.</title>
        <authorList>
            <person name="Silby M.W."/>
            <person name="Cerdeno-Tarraga A.M."/>
            <person name="Vernikos G.S."/>
            <person name="Giddens S.R."/>
            <person name="Jackson R.W."/>
            <person name="Preston G.M."/>
            <person name="Zhang X.-X."/>
            <person name="Moon C.D."/>
            <person name="Gehrig S.M."/>
            <person name="Godfrey S.A.C."/>
            <person name="Knight C.G."/>
            <person name="Malone J.G."/>
            <person name="Robinson Z."/>
            <person name="Spiers A.J."/>
            <person name="Harris S."/>
            <person name="Challis G.L."/>
            <person name="Yaxley A.M."/>
            <person name="Harris D."/>
            <person name="Seeger K."/>
            <person name="Murphy L."/>
            <person name="Rutter S."/>
            <person name="Squares R."/>
            <person name="Quail M.A."/>
            <person name="Saunders E."/>
            <person name="Mavromatis K."/>
            <person name="Brettin T.S."/>
            <person name="Bentley S.D."/>
            <person name="Hothersall J."/>
            <person name="Stephens E."/>
            <person name="Thomas C.M."/>
            <person name="Parkhill J."/>
            <person name="Levy S.B."/>
            <person name="Rainey P.B."/>
            <person name="Thomson N.R."/>
        </authorList>
    </citation>
    <scope>NUCLEOTIDE SEQUENCE [LARGE SCALE GENOMIC DNA]</scope>
    <source>
        <strain>SBW25</strain>
    </source>
</reference>
<gene>
    <name evidence="1" type="primary">rpsP</name>
    <name type="ordered locus">PFLU_5012</name>
</gene>
<sequence length="83" mass="9208">MLTIRLALGGSKKRPFYHLTVTDSRNPRDGSHKEQVGFFNPVARGQEVRLSVNQERVAYWLSVGAQPSERVAKLLKDSAKAAA</sequence>
<feature type="chain" id="PRO_1000205769" description="Small ribosomal subunit protein bS16">
    <location>
        <begin position="1"/>
        <end position="83"/>
    </location>
</feature>
<accession>C3K1H1</accession>
<comment type="similarity">
    <text evidence="1">Belongs to the bacterial ribosomal protein bS16 family.</text>
</comment>
<evidence type="ECO:0000255" key="1">
    <source>
        <dbReference type="HAMAP-Rule" id="MF_00385"/>
    </source>
</evidence>
<evidence type="ECO:0000305" key="2"/>
<dbReference type="EMBL" id="AM181176">
    <property type="protein sequence ID" value="CAY51981.1"/>
    <property type="molecule type" value="Genomic_DNA"/>
</dbReference>
<dbReference type="RefSeq" id="WP_003175899.1">
    <property type="nucleotide sequence ID" value="NC_012660.1"/>
</dbReference>
<dbReference type="SMR" id="C3K1H1"/>
<dbReference type="STRING" id="294.SRM1_01074"/>
<dbReference type="GeneID" id="97824001"/>
<dbReference type="eggNOG" id="COG0228">
    <property type="taxonomic scope" value="Bacteria"/>
</dbReference>
<dbReference type="HOGENOM" id="CLU_100590_5_1_6"/>
<dbReference type="OrthoDB" id="9807878at2"/>
<dbReference type="GO" id="GO:0005737">
    <property type="term" value="C:cytoplasm"/>
    <property type="evidence" value="ECO:0007669"/>
    <property type="project" value="UniProtKB-ARBA"/>
</dbReference>
<dbReference type="GO" id="GO:0015935">
    <property type="term" value="C:small ribosomal subunit"/>
    <property type="evidence" value="ECO:0007669"/>
    <property type="project" value="TreeGrafter"/>
</dbReference>
<dbReference type="GO" id="GO:0003735">
    <property type="term" value="F:structural constituent of ribosome"/>
    <property type="evidence" value="ECO:0007669"/>
    <property type="project" value="InterPro"/>
</dbReference>
<dbReference type="GO" id="GO:0006412">
    <property type="term" value="P:translation"/>
    <property type="evidence" value="ECO:0007669"/>
    <property type="project" value="UniProtKB-UniRule"/>
</dbReference>
<dbReference type="Gene3D" id="3.30.1320.10">
    <property type="match status" value="1"/>
</dbReference>
<dbReference type="HAMAP" id="MF_00385">
    <property type="entry name" value="Ribosomal_bS16"/>
    <property type="match status" value="1"/>
</dbReference>
<dbReference type="InterPro" id="IPR000307">
    <property type="entry name" value="Ribosomal_bS16"/>
</dbReference>
<dbReference type="InterPro" id="IPR023803">
    <property type="entry name" value="Ribosomal_bS16_dom_sf"/>
</dbReference>
<dbReference type="NCBIfam" id="TIGR00002">
    <property type="entry name" value="S16"/>
    <property type="match status" value="1"/>
</dbReference>
<dbReference type="PANTHER" id="PTHR12919">
    <property type="entry name" value="30S RIBOSOMAL PROTEIN S16"/>
    <property type="match status" value="1"/>
</dbReference>
<dbReference type="PANTHER" id="PTHR12919:SF20">
    <property type="entry name" value="SMALL RIBOSOMAL SUBUNIT PROTEIN BS16M"/>
    <property type="match status" value="1"/>
</dbReference>
<dbReference type="Pfam" id="PF00886">
    <property type="entry name" value="Ribosomal_S16"/>
    <property type="match status" value="1"/>
</dbReference>
<dbReference type="SUPFAM" id="SSF54565">
    <property type="entry name" value="Ribosomal protein S16"/>
    <property type="match status" value="1"/>
</dbReference>